<name>GLO1B_ORYSJ</name>
<comment type="function">
    <text evidence="1">Aldehyde decarbonylase involved in the conversion of aldehydes to alkanes. Core component of a very-long-chain alkane synthesis complex.</text>
</comment>
<comment type="catalytic activity">
    <reaction evidence="1">
        <text>a long-chain fatty aldehyde + 2 NADPH + O2 + H(+) = a long-chain alkane + formate + 2 NADP(+) + H2O</text>
        <dbReference type="Rhea" id="RHEA:21440"/>
        <dbReference type="ChEBI" id="CHEBI:15377"/>
        <dbReference type="ChEBI" id="CHEBI:15378"/>
        <dbReference type="ChEBI" id="CHEBI:15379"/>
        <dbReference type="ChEBI" id="CHEBI:15740"/>
        <dbReference type="ChEBI" id="CHEBI:17176"/>
        <dbReference type="ChEBI" id="CHEBI:57783"/>
        <dbReference type="ChEBI" id="CHEBI:58349"/>
        <dbReference type="ChEBI" id="CHEBI:83563"/>
        <dbReference type="EC" id="4.1.99.5"/>
    </reaction>
</comment>
<comment type="subunit">
    <text evidence="1">Homodimer.</text>
</comment>
<comment type="subcellular location">
    <subcellularLocation>
        <location evidence="1">Endoplasmic reticulum membrane</location>
        <topology evidence="1">Multi-pass membrane protein</topology>
    </subcellularLocation>
</comment>
<comment type="tissue specificity">
    <text evidence="3">Expressed ubiquitously.</text>
</comment>
<comment type="similarity">
    <text evidence="5">Belongs to the sterol desaturase family.</text>
</comment>
<protein>
    <recommendedName>
        <fullName evidence="5">Very-long-chain aldehyde decarbonylase GL1-11</fullName>
        <ecNumber evidence="1">4.1.99.5</ecNumber>
    </recommendedName>
    <alternativeName>
        <fullName evidence="4">Protein GLOSSY 1-11</fullName>
    </alternativeName>
</protein>
<keyword id="KW-0256">Endoplasmic reticulum</keyword>
<keyword id="KW-0456">Lyase</keyword>
<keyword id="KW-0472">Membrane</keyword>
<keyword id="KW-0521">NADP</keyword>
<keyword id="KW-1185">Reference proteome</keyword>
<keyword id="KW-0812">Transmembrane</keyword>
<keyword id="KW-1133">Transmembrane helix</keyword>
<evidence type="ECO:0000250" key="1">
    <source>
        <dbReference type="UniProtKB" id="F4HVY0"/>
    </source>
</evidence>
<evidence type="ECO:0000255" key="2"/>
<evidence type="ECO:0000269" key="3">
    <source>
    </source>
</evidence>
<evidence type="ECO:0000303" key="4">
    <source>
    </source>
</evidence>
<evidence type="ECO:0000305" key="5"/>
<evidence type="ECO:0000312" key="6">
    <source>
        <dbReference type="EMBL" id="ABA95528.1"/>
    </source>
</evidence>
<evidence type="ECO:0000312" key="7">
    <source>
        <dbReference type="EMBL" id="BAF28920.1"/>
    </source>
</evidence>
<evidence type="ECO:0000312" key="8">
    <source>
        <dbReference type="EMBL" id="BAT15423.1"/>
    </source>
</evidence>
<evidence type="ECO:0000312" key="9">
    <source>
        <dbReference type="EMBL" id="EEE52583.1"/>
    </source>
</evidence>
<reference key="1">
    <citation type="journal article" date="2005" name="BMC Biol.">
        <title>The sequence of rice chromosomes 11 and 12, rich in disease resistance genes and recent gene duplications.</title>
        <authorList>
            <consortium name="The rice chromosomes 11 and 12 sequencing consortia"/>
        </authorList>
    </citation>
    <scope>NUCLEOTIDE SEQUENCE [LARGE SCALE GENOMIC DNA]</scope>
    <source>
        <strain>cv. Nipponbare</strain>
    </source>
</reference>
<reference key="2">
    <citation type="journal article" date="2005" name="Nature">
        <title>The map-based sequence of the rice genome.</title>
        <authorList>
            <consortium name="International rice genome sequencing project (IRGSP)"/>
        </authorList>
    </citation>
    <scope>NUCLEOTIDE SEQUENCE [LARGE SCALE GENOMIC DNA]</scope>
    <source>
        <strain>cv. Nipponbare</strain>
    </source>
</reference>
<reference key="3">
    <citation type="journal article" date="2008" name="Nucleic Acids Res.">
        <title>The rice annotation project database (RAP-DB): 2008 update.</title>
        <authorList>
            <consortium name="The rice annotation project (RAP)"/>
        </authorList>
    </citation>
    <scope>GENOME REANNOTATION</scope>
    <source>
        <strain>cv. Nipponbare</strain>
    </source>
</reference>
<reference key="4">
    <citation type="journal article" date="2013" name="Rice">
        <title>Improvement of the Oryza sativa Nipponbare reference genome using next generation sequence and optical map data.</title>
        <authorList>
            <person name="Kawahara Y."/>
            <person name="de la Bastide M."/>
            <person name="Hamilton J.P."/>
            <person name="Kanamori H."/>
            <person name="McCombie W.R."/>
            <person name="Ouyang S."/>
            <person name="Schwartz D.C."/>
            <person name="Tanaka T."/>
            <person name="Wu J."/>
            <person name="Zhou S."/>
            <person name="Childs K.L."/>
            <person name="Davidson R.M."/>
            <person name="Lin H."/>
            <person name="Quesada-Ocampo L."/>
            <person name="Vaillancourt B."/>
            <person name="Sakai H."/>
            <person name="Lee S.S."/>
            <person name="Kim J."/>
            <person name="Numa H."/>
            <person name="Itoh T."/>
            <person name="Buell C.R."/>
            <person name="Matsumoto T."/>
        </authorList>
    </citation>
    <scope>GENOME REANNOTATION</scope>
    <source>
        <strain>cv. Nipponbare</strain>
    </source>
</reference>
<reference key="5">
    <citation type="journal article" date="2005" name="PLoS Biol.">
        <title>The genomes of Oryza sativa: a history of duplications.</title>
        <authorList>
            <person name="Yu J."/>
            <person name="Wang J."/>
            <person name="Lin W."/>
            <person name="Li S."/>
            <person name="Li H."/>
            <person name="Zhou J."/>
            <person name="Ni P."/>
            <person name="Dong W."/>
            <person name="Hu S."/>
            <person name="Zeng C."/>
            <person name="Zhang J."/>
            <person name="Zhang Y."/>
            <person name="Li R."/>
            <person name="Xu Z."/>
            <person name="Li S."/>
            <person name="Li X."/>
            <person name="Zheng H."/>
            <person name="Cong L."/>
            <person name="Lin L."/>
            <person name="Yin J."/>
            <person name="Geng J."/>
            <person name="Li G."/>
            <person name="Shi J."/>
            <person name="Liu J."/>
            <person name="Lv H."/>
            <person name="Li J."/>
            <person name="Wang J."/>
            <person name="Deng Y."/>
            <person name="Ran L."/>
            <person name="Shi X."/>
            <person name="Wang X."/>
            <person name="Wu Q."/>
            <person name="Li C."/>
            <person name="Ren X."/>
            <person name="Wang J."/>
            <person name="Wang X."/>
            <person name="Li D."/>
            <person name="Liu D."/>
            <person name="Zhang X."/>
            <person name="Ji Z."/>
            <person name="Zhao W."/>
            <person name="Sun Y."/>
            <person name="Zhang Z."/>
            <person name="Bao J."/>
            <person name="Han Y."/>
            <person name="Dong L."/>
            <person name="Ji J."/>
            <person name="Chen P."/>
            <person name="Wu S."/>
            <person name="Liu J."/>
            <person name="Xiao Y."/>
            <person name="Bu D."/>
            <person name="Tan J."/>
            <person name="Yang L."/>
            <person name="Ye C."/>
            <person name="Zhang J."/>
            <person name="Xu J."/>
            <person name="Zhou Y."/>
            <person name="Yu Y."/>
            <person name="Zhang B."/>
            <person name="Zhuang S."/>
            <person name="Wei H."/>
            <person name="Liu B."/>
            <person name="Lei M."/>
            <person name="Yu H."/>
            <person name="Li Y."/>
            <person name="Xu H."/>
            <person name="Wei S."/>
            <person name="He X."/>
            <person name="Fang L."/>
            <person name="Zhang Z."/>
            <person name="Zhang Y."/>
            <person name="Huang X."/>
            <person name="Su Z."/>
            <person name="Tong W."/>
            <person name="Li J."/>
            <person name="Tong Z."/>
            <person name="Li S."/>
            <person name="Ye J."/>
            <person name="Wang L."/>
            <person name="Fang L."/>
            <person name="Lei T."/>
            <person name="Chen C.-S."/>
            <person name="Chen H.-C."/>
            <person name="Xu Z."/>
            <person name="Li H."/>
            <person name="Huang H."/>
            <person name="Zhang F."/>
            <person name="Xu H."/>
            <person name="Li N."/>
            <person name="Zhao C."/>
            <person name="Li S."/>
            <person name="Dong L."/>
            <person name="Huang Y."/>
            <person name="Li L."/>
            <person name="Xi Y."/>
            <person name="Qi Q."/>
            <person name="Li W."/>
            <person name="Zhang B."/>
            <person name="Hu W."/>
            <person name="Zhang Y."/>
            <person name="Tian X."/>
            <person name="Jiao Y."/>
            <person name="Liang X."/>
            <person name="Jin J."/>
            <person name="Gao L."/>
            <person name="Zheng W."/>
            <person name="Hao B."/>
            <person name="Liu S.-M."/>
            <person name="Wang W."/>
            <person name="Yuan L."/>
            <person name="Cao M."/>
            <person name="McDermott J."/>
            <person name="Samudrala R."/>
            <person name="Wang J."/>
            <person name="Wong G.K.-S."/>
            <person name="Yang H."/>
        </authorList>
    </citation>
    <scope>NUCLEOTIDE SEQUENCE [LARGE SCALE GENOMIC DNA]</scope>
    <source>
        <strain>cv. Nipponbare</strain>
    </source>
</reference>
<reference key="6">
    <citation type="journal article" date="2003" name="Science">
        <title>Collection, mapping, and annotation of over 28,000 cDNA clones from japonica rice.</title>
        <authorList>
            <consortium name="The rice full-length cDNA consortium"/>
        </authorList>
    </citation>
    <scope>NUCLEOTIDE SEQUENCE [LARGE SCALE MRNA]</scope>
    <source>
        <strain>cv. Nipponbare</strain>
    </source>
</reference>
<reference key="7">
    <citation type="journal article" date="2009" name="Plant Mol. Biol.">
        <title>Characterization of Glossy1-homologous genes in rice involved in leaf wax accumulation and drought resistance.</title>
        <authorList>
            <person name="Islam M.A."/>
            <person name="Du H."/>
            <person name="Ning J."/>
            <person name="Ye H."/>
            <person name="Xiong L."/>
        </authorList>
    </citation>
    <scope>TISSUE SPECIFICITY</scope>
    <scope>GENE FAMILY</scope>
    <scope>NOMENCLATURE</scope>
</reference>
<accession>Q2QZ14</accession>
<sequence>MAASALDSAWEGLTGSFTEFQLATVVTFLLHETVFFLSGLPSLLFERFGLFAKYKIQKKSNTPSYQNRCVLRLILYHVCVNLPVMVLSYPAFKFMGLRSSLPLPHWTVIVSQVLFYFVLEDFIFYWGHRALHTKWLYKHVHSVHHEYATPFGLTSEYAHPAEILFLGFATIVGPALTGPHLFTLWLWMVLRVLETVEAHSGYHFPWSPSNFLPLYGGSDFHDYHHRVLYTKSGNYASTFVYMDWLFGTDKDYRNAKAIEEKDGKHL</sequence>
<feature type="chain" id="PRO_0000445885" description="Very-long-chain aldehyde decarbonylase GL1-11">
    <location>
        <begin position="1"/>
        <end position="266"/>
    </location>
</feature>
<feature type="transmembrane region" description="Helical" evidence="2">
    <location>
        <begin position="25"/>
        <end position="45"/>
    </location>
</feature>
<feature type="transmembrane region" description="Helical" evidence="2">
    <location>
        <begin position="74"/>
        <end position="94"/>
    </location>
</feature>
<feature type="transmembrane region" description="Helical" evidence="2">
    <location>
        <begin position="106"/>
        <end position="126"/>
    </location>
</feature>
<feature type="transmembrane region" description="Helical" evidence="2">
    <location>
        <begin position="163"/>
        <end position="183"/>
    </location>
</feature>
<feature type="domain" description="Fatty acid hydroxylase" evidence="2">
    <location>
        <begin position="113"/>
        <end position="248"/>
    </location>
</feature>
<dbReference type="EC" id="4.1.99.5" evidence="1"/>
<dbReference type="EMBL" id="DP000010">
    <property type="protein sequence ID" value="ABA95528.1"/>
    <property type="molecule type" value="Genomic_DNA"/>
</dbReference>
<dbReference type="EMBL" id="AP008217">
    <property type="protein sequence ID" value="BAF28920.1"/>
    <property type="molecule type" value="Genomic_DNA"/>
</dbReference>
<dbReference type="EMBL" id="AP014967">
    <property type="protein sequence ID" value="BAT15423.1"/>
    <property type="molecule type" value="Genomic_DNA"/>
</dbReference>
<dbReference type="EMBL" id="CM000148">
    <property type="protein sequence ID" value="EEE52583.1"/>
    <property type="molecule type" value="Genomic_DNA"/>
</dbReference>
<dbReference type="EMBL" id="AK060049">
    <property type="protein sequence ID" value="BAG87287.1"/>
    <property type="molecule type" value="mRNA"/>
</dbReference>
<dbReference type="EMBL" id="AK102938">
    <property type="protein sequence ID" value="BAG95792.1"/>
    <property type="molecule type" value="mRNA"/>
</dbReference>
<dbReference type="RefSeq" id="XP_015616390.1">
    <property type="nucleotide sequence ID" value="XM_015760904.1"/>
</dbReference>
<dbReference type="SMR" id="Q2QZ14"/>
<dbReference type="FunCoup" id="Q2QZ14">
    <property type="interactions" value="1048"/>
</dbReference>
<dbReference type="STRING" id="39947.Q2QZ14"/>
<dbReference type="PaxDb" id="39947-Q2QZ14"/>
<dbReference type="EnsemblPlants" id="Os11t0707600-01">
    <property type="protein sequence ID" value="Os11t0707600-01"/>
    <property type="gene ID" value="Os11g0707600"/>
</dbReference>
<dbReference type="EnsemblPlants" id="Os11t0707600-02">
    <property type="protein sequence ID" value="Os11t0707600-02"/>
    <property type="gene ID" value="Os11g0707600"/>
</dbReference>
<dbReference type="Gramene" id="Os11t0707600-01">
    <property type="protein sequence ID" value="Os11t0707600-01"/>
    <property type="gene ID" value="Os11g0707600"/>
</dbReference>
<dbReference type="Gramene" id="Os11t0707600-02">
    <property type="protein sequence ID" value="Os11t0707600-02"/>
    <property type="gene ID" value="Os11g0707600"/>
</dbReference>
<dbReference type="KEGG" id="dosa:Os11g0707600"/>
<dbReference type="KEGG" id="osa:4351226"/>
<dbReference type="eggNOG" id="KOG0873">
    <property type="taxonomic scope" value="Eukaryota"/>
</dbReference>
<dbReference type="HOGENOM" id="CLU_047036_5_3_1"/>
<dbReference type="InParanoid" id="Q2QZ14"/>
<dbReference type="OMA" id="IVHEFIY"/>
<dbReference type="PlantReactome" id="R-OSA-1119286">
    <property type="pathway name" value="Cholesterol biosynthesis II (via 24,25-dihydrolanosterol)"/>
</dbReference>
<dbReference type="PlantReactome" id="R-OSA-1119439">
    <property type="pathway name" value="Cholesterol biosynthesis III (via desmosterol)"/>
</dbReference>
<dbReference type="PlantReactome" id="R-OSA-1119559">
    <property type="pathway name" value="Cholesterol biosynthesis I"/>
</dbReference>
<dbReference type="Proteomes" id="UP000000763">
    <property type="component" value="Chromosome 11"/>
</dbReference>
<dbReference type="Proteomes" id="UP000007752">
    <property type="component" value="Chromosome 11"/>
</dbReference>
<dbReference type="Proteomes" id="UP000059680">
    <property type="component" value="Chromosome 11"/>
</dbReference>
<dbReference type="GO" id="GO:0005789">
    <property type="term" value="C:endoplasmic reticulum membrane"/>
    <property type="evidence" value="ECO:0000318"/>
    <property type="project" value="GO_Central"/>
</dbReference>
<dbReference type="GO" id="GO:0071771">
    <property type="term" value="F:aldehyde oxygenase (deformylating) activity"/>
    <property type="evidence" value="ECO:0007669"/>
    <property type="project" value="UniProtKB-EC"/>
</dbReference>
<dbReference type="GO" id="GO:0000254">
    <property type="term" value="F:C-4 methylsterol oxidase activity"/>
    <property type="evidence" value="ECO:0000318"/>
    <property type="project" value="GO_Central"/>
</dbReference>
<dbReference type="GO" id="GO:0005506">
    <property type="term" value="F:iron ion binding"/>
    <property type="evidence" value="ECO:0007669"/>
    <property type="project" value="InterPro"/>
</dbReference>
<dbReference type="GO" id="GO:0080065">
    <property type="term" value="P:4-alpha-methyl-delta7-sterol oxidation"/>
    <property type="evidence" value="ECO:0000318"/>
    <property type="project" value="GO_Central"/>
</dbReference>
<dbReference type="GO" id="GO:0016126">
    <property type="term" value="P:sterol biosynthetic process"/>
    <property type="evidence" value="ECO:0000318"/>
    <property type="project" value="GO_Central"/>
</dbReference>
<dbReference type="InterPro" id="IPR006694">
    <property type="entry name" value="Fatty_acid_hydroxylase"/>
</dbReference>
<dbReference type="InterPro" id="IPR050307">
    <property type="entry name" value="Sterol_Desaturase_Related"/>
</dbReference>
<dbReference type="PANTHER" id="PTHR11863">
    <property type="entry name" value="STEROL DESATURASE"/>
    <property type="match status" value="1"/>
</dbReference>
<dbReference type="Pfam" id="PF04116">
    <property type="entry name" value="FA_hydroxylase"/>
    <property type="match status" value="1"/>
</dbReference>
<proteinExistence type="evidence at transcript level"/>
<organism>
    <name type="scientific">Oryza sativa subsp. japonica</name>
    <name type="common">Rice</name>
    <dbReference type="NCBI Taxonomy" id="39947"/>
    <lineage>
        <taxon>Eukaryota</taxon>
        <taxon>Viridiplantae</taxon>
        <taxon>Streptophyta</taxon>
        <taxon>Embryophyta</taxon>
        <taxon>Tracheophyta</taxon>
        <taxon>Spermatophyta</taxon>
        <taxon>Magnoliopsida</taxon>
        <taxon>Liliopsida</taxon>
        <taxon>Poales</taxon>
        <taxon>Poaceae</taxon>
        <taxon>BOP clade</taxon>
        <taxon>Oryzoideae</taxon>
        <taxon>Oryzeae</taxon>
        <taxon>Oryzinae</taxon>
        <taxon>Oryza</taxon>
        <taxon>Oryza sativa</taxon>
    </lineage>
</organism>
<gene>
    <name evidence="4" type="primary">GL1-11</name>
    <name evidence="6" type="ordered locus">LOC_Os11g48020</name>
    <name evidence="7" type="ordered locus">Os11g0707600</name>
    <name evidence="9" type="ORF">OsJ_34885</name>
    <name evidence="8" type="ORF">OSNPB_110707600</name>
</gene>